<feature type="chain" id="PRO_0000363714" description="Ras-like protein 1" evidence="2">
    <location>
        <begin position="1"/>
        <end position="186"/>
    </location>
</feature>
<feature type="propeptide" id="PRO_0000363715" description="Removed in mature form" evidence="2">
    <location>
        <begin position="187"/>
        <end position="189"/>
    </location>
</feature>
<feature type="short sequence motif" description="Effector region">
    <location>
        <begin position="32"/>
        <end position="40"/>
    </location>
</feature>
<feature type="binding site" evidence="1">
    <location>
        <begin position="10"/>
        <end position="17"/>
    </location>
    <ligand>
        <name>GTP</name>
        <dbReference type="ChEBI" id="CHEBI:37565"/>
    </ligand>
</feature>
<feature type="binding site" evidence="1">
    <location>
        <begin position="57"/>
        <end position="61"/>
    </location>
    <ligand>
        <name>GTP</name>
        <dbReference type="ChEBI" id="CHEBI:37565"/>
    </ligand>
</feature>
<feature type="binding site" evidence="1">
    <location>
        <begin position="116"/>
        <end position="119"/>
    </location>
    <ligand>
        <name>GTP</name>
        <dbReference type="ChEBI" id="CHEBI:37565"/>
    </ligand>
</feature>
<feature type="modified residue" description="Cysteine methyl ester" evidence="2">
    <location>
        <position position="186"/>
    </location>
</feature>
<feature type="lipid moiety-binding region" description="S-geranylgeranyl cysteine" evidence="2">
    <location>
        <position position="186"/>
    </location>
</feature>
<protein>
    <recommendedName>
        <fullName evidence="2">Ras-like protein 1</fullName>
        <ecNumber evidence="1">3.6.5.2</ecNumber>
    </recommendedName>
</protein>
<comment type="function">
    <text evidence="1 2">Ras proteins bind GDP/GTP and possess intrinsic GTPase activity. Plays a role in eye development by regulating cell growth, survival of postmitotic ommatidial cells and differentiation of photoreceptor cells. During larval development, mediates Ptth/tor signaling leading to the production of ecdysone, a hormone required for the initiation of metamorphosis.</text>
</comment>
<comment type="catalytic activity">
    <reaction evidence="1">
        <text>GTP + H2O = GDP + phosphate + H(+)</text>
        <dbReference type="Rhea" id="RHEA:19669"/>
        <dbReference type="ChEBI" id="CHEBI:15377"/>
        <dbReference type="ChEBI" id="CHEBI:15378"/>
        <dbReference type="ChEBI" id="CHEBI:37565"/>
        <dbReference type="ChEBI" id="CHEBI:43474"/>
        <dbReference type="ChEBI" id="CHEBI:58189"/>
        <dbReference type="EC" id="3.6.5.2"/>
    </reaction>
</comment>
<comment type="activity regulation">
    <text>Alternates between an inactive form bound to GDP and an active form bound to GTP. Activated by a guanine nucleotide-exchange factor (GEF) and inactivated by a GTPase-activating protein (GAP).</text>
</comment>
<comment type="subcellular location">
    <subcellularLocation>
        <location evidence="2">Cell membrane</location>
        <topology evidence="2">Lipid-anchor</topology>
        <orientation evidence="2">Cytoplasmic side</orientation>
    </subcellularLocation>
</comment>
<comment type="similarity">
    <text evidence="3">Belongs to the small GTPase superfamily. Ras family.</text>
</comment>
<reference evidence="4" key="1">
    <citation type="journal article" date="2007" name="Nature">
        <title>Evolution of genes and genomes on the Drosophila phylogeny.</title>
        <authorList>
            <consortium name="Drosophila 12 genomes consortium"/>
        </authorList>
    </citation>
    <scope>NUCLEOTIDE SEQUENCE [LARGE SCALE GENOMIC DNA]</scope>
    <source>
        <strain>MSH-3 / Tucson 14011-0111.49</strain>
    </source>
</reference>
<accession>B4GFJ8</accession>
<dbReference type="EC" id="3.6.5.2" evidence="1"/>
<dbReference type="EMBL" id="CH479182">
    <property type="protein sequence ID" value="EDW34383.1"/>
    <property type="molecule type" value="Genomic_DNA"/>
</dbReference>
<dbReference type="SMR" id="B4GFJ8"/>
<dbReference type="STRING" id="7234.B4GFJ8"/>
<dbReference type="EnsemblMetazoa" id="FBtr0187842">
    <property type="protein sequence ID" value="FBpp0186334"/>
    <property type="gene ID" value="FBgn0159819"/>
</dbReference>
<dbReference type="EnsemblMetazoa" id="XM_002017247.2">
    <property type="protein sequence ID" value="XP_002017283.1"/>
    <property type="gene ID" value="LOC6592147"/>
</dbReference>
<dbReference type="GeneID" id="6592147"/>
<dbReference type="KEGG" id="dpe:6592147"/>
<dbReference type="CTD" id="41140"/>
<dbReference type="eggNOG" id="KOG0395">
    <property type="taxonomic scope" value="Eukaryota"/>
</dbReference>
<dbReference type="HOGENOM" id="CLU_041217_9_8_1"/>
<dbReference type="OMA" id="CCGGCVI"/>
<dbReference type="OrthoDB" id="5976022at2759"/>
<dbReference type="PhylomeDB" id="B4GFJ8"/>
<dbReference type="ChiTaRS" id="Ras85D">
    <property type="organism name" value="fly"/>
</dbReference>
<dbReference type="Proteomes" id="UP000008744">
    <property type="component" value="Unassembled WGS sequence"/>
</dbReference>
<dbReference type="GO" id="GO:0016020">
    <property type="term" value="C:membrane"/>
    <property type="evidence" value="ECO:0000250"/>
    <property type="project" value="UniProtKB"/>
</dbReference>
<dbReference type="GO" id="GO:0005886">
    <property type="term" value="C:plasma membrane"/>
    <property type="evidence" value="ECO:0007669"/>
    <property type="project" value="UniProtKB-SubCell"/>
</dbReference>
<dbReference type="GO" id="GO:0003925">
    <property type="term" value="F:G protein activity"/>
    <property type="evidence" value="ECO:0007669"/>
    <property type="project" value="UniProtKB-EC"/>
</dbReference>
<dbReference type="GO" id="GO:0005525">
    <property type="term" value="F:GTP binding"/>
    <property type="evidence" value="ECO:0007669"/>
    <property type="project" value="UniProtKB-KW"/>
</dbReference>
<dbReference type="GO" id="GO:0043539">
    <property type="term" value="F:protein serine/threonine kinase activator activity"/>
    <property type="evidence" value="ECO:0007669"/>
    <property type="project" value="EnsemblMetazoa"/>
</dbReference>
<dbReference type="GO" id="GO:0007298">
    <property type="term" value="P:border follicle cell migration"/>
    <property type="evidence" value="ECO:0007669"/>
    <property type="project" value="EnsemblMetazoa"/>
</dbReference>
<dbReference type="GO" id="GO:0009267">
    <property type="term" value="P:cellular response to starvation"/>
    <property type="evidence" value="ECO:0007669"/>
    <property type="project" value="EnsemblMetazoa"/>
</dbReference>
<dbReference type="GO" id="GO:0030381">
    <property type="term" value="P:chorion-containing eggshell pattern formation"/>
    <property type="evidence" value="ECO:0007669"/>
    <property type="project" value="EnsemblMetazoa"/>
</dbReference>
<dbReference type="GO" id="GO:0051607">
    <property type="term" value="P:defense response to virus"/>
    <property type="evidence" value="ECO:0007669"/>
    <property type="project" value="EnsemblMetazoa"/>
</dbReference>
<dbReference type="GO" id="GO:0008340">
    <property type="term" value="P:determination of adult lifespan"/>
    <property type="evidence" value="ECO:0007669"/>
    <property type="project" value="EnsemblMetazoa"/>
</dbReference>
<dbReference type="GO" id="GO:0007395">
    <property type="term" value="P:dorsal closure, spreading of leading edge cells"/>
    <property type="evidence" value="ECO:0007669"/>
    <property type="project" value="EnsemblMetazoa"/>
</dbReference>
<dbReference type="GO" id="GO:0007173">
    <property type="term" value="P:epidermal growth factor receptor signaling pathway"/>
    <property type="evidence" value="ECO:0007669"/>
    <property type="project" value="EnsemblMetazoa"/>
</dbReference>
<dbReference type="GO" id="GO:0007427">
    <property type="term" value="P:epithelial cell migration, open tracheal system"/>
    <property type="evidence" value="ECO:0007669"/>
    <property type="project" value="EnsemblMetazoa"/>
</dbReference>
<dbReference type="GO" id="GO:0035088">
    <property type="term" value="P:establishment or maintenance of apical/basal cell polarity"/>
    <property type="evidence" value="ECO:0007669"/>
    <property type="project" value="EnsemblMetazoa"/>
</dbReference>
<dbReference type="GO" id="GO:0007455">
    <property type="term" value="P:eye-antennal disc morphogenesis"/>
    <property type="evidence" value="ECO:0007669"/>
    <property type="project" value="EnsemblMetazoa"/>
</dbReference>
<dbReference type="GO" id="GO:0008543">
    <property type="term" value="P:fibroblast growth factor receptor signaling pathway"/>
    <property type="evidence" value="ECO:0007669"/>
    <property type="project" value="EnsemblMetazoa"/>
</dbReference>
<dbReference type="GO" id="GO:0035099">
    <property type="term" value="P:hemocyte migration"/>
    <property type="evidence" value="ECO:0007669"/>
    <property type="project" value="EnsemblMetazoa"/>
</dbReference>
<dbReference type="GO" id="GO:0008586">
    <property type="term" value="P:imaginal disc-derived wing vein morphogenesis"/>
    <property type="evidence" value="ECO:0007669"/>
    <property type="project" value="EnsemblMetazoa"/>
</dbReference>
<dbReference type="GO" id="GO:0007474">
    <property type="term" value="P:imaginal disc-derived wing vein specification"/>
    <property type="evidence" value="ECO:0007669"/>
    <property type="project" value="EnsemblMetazoa"/>
</dbReference>
<dbReference type="GO" id="GO:0002168">
    <property type="term" value="P:instar larval development"/>
    <property type="evidence" value="ECO:0007669"/>
    <property type="project" value="EnsemblMetazoa"/>
</dbReference>
<dbReference type="GO" id="GO:0036335">
    <property type="term" value="P:intestinal stem cell homeostasis"/>
    <property type="evidence" value="ECO:0007669"/>
    <property type="project" value="EnsemblMetazoa"/>
</dbReference>
<dbReference type="GO" id="GO:0007479">
    <property type="term" value="P:leg disc proximal/distal pattern formation"/>
    <property type="evidence" value="ECO:0007669"/>
    <property type="project" value="EnsemblMetazoa"/>
</dbReference>
<dbReference type="GO" id="GO:0035170">
    <property type="term" value="P:lymph gland crystal cell differentiation"/>
    <property type="evidence" value="ECO:0007669"/>
    <property type="project" value="EnsemblMetazoa"/>
</dbReference>
<dbReference type="GO" id="GO:0035169">
    <property type="term" value="P:lymph gland plasmatocyte differentiation"/>
    <property type="evidence" value="ECO:0007669"/>
    <property type="project" value="EnsemblMetazoa"/>
</dbReference>
<dbReference type="GO" id="GO:0072002">
    <property type="term" value="P:Malpighian tubule development"/>
    <property type="evidence" value="ECO:0007669"/>
    <property type="project" value="EnsemblMetazoa"/>
</dbReference>
<dbReference type="GO" id="GO:0000165">
    <property type="term" value="P:MAPK cascade"/>
    <property type="evidence" value="ECO:0007669"/>
    <property type="project" value="EnsemblMetazoa"/>
</dbReference>
<dbReference type="GO" id="GO:0001710">
    <property type="term" value="P:mesodermal cell fate commitment"/>
    <property type="evidence" value="ECO:0007669"/>
    <property type="project" value="EnsemblMetazoa"/>
</dbReference>
<dbReference type="GO" id="GO:0048626">
    <property type="term" value="P:myoblast fate specification"/>
    <property type="evidence" value="ECO:0007669"/>
    <property type="project" value="EnsemblMetazoa"/>
</dbReference>
<dbReference type="GO" id="GO:2001234">
    <property type="term" value="P:negative regulation of apoptotic signaling pathway"/>
    <property type="evidence" value="ECO:0007669"/>
    <property type="project" value="EnsemblMetazoa"/>
</dbReference>
<dbReference type="GO" id="GO:0046673">
    <property type="term" value="P:negative regulation of compound eye retinal cell programmed cell death"/>
    <property type="evidence" value="ECO:0007669"/>
    <property type="project" value="EnsemblMetazoa"/>
</dbReference>
<dbReference type="GO" id="GO:0010629">
    <property type="term" value="P:negative regulation of gene expression"/>
    <property type="evidence" value="ECO:0007669"/>
    <property type="project" value="EnsemblMetazoa"/>
</dbReference>
<dbReference type="GO" id="GO:0016242">
    <property type="term" value="P:negative regulation of macroautophagy"/>
    <property type="evidence" value="ECO:0007669"/>
    <property type="project" value="EnsemblMetazoa"/>
</dbReference>
<dbReference type="GO" id="GO:0016318">
    <property type="term" value="P:ommatidial rotation"/>
    <property type="evidence" value="ECO:0007669"/>
    <property type="project" value="EnsemblMetazoa"/>
</dbReference>
<dbReference type="GO" id="GO:0007309">
    <property type="term" value="P:oocyte axis specification"/>
    <property type="evidence" value="ECO:0007669"/>
    <property type="project" value="EnsemblMetazoa"/>
</dbReference>
<dbReference type="GO" id="GO:0007422">
    <property type="term" value="P:peripheral nervous system development"/>
    <property type="evidence" value="ECO:0007669"/>
    <property type="project" value="EnsemblMetazoa"/>
</dbReference>
<dbReference type="GO" id="GO:0043703">
    <property type="term" value="P:photoreceptor cell fate determination"/>
    <property type="evidence" value="ECO:0007669"/>
    <property type="project" value="EnsemblMetazoa"/>
</dbReference>
<dbReference type="GO" id="GO:0008594">
    <property type="term" value="P:photoreceptor cell morphogenesis"/>
    <property type="evidence" value="ECO:0007669"/>
    <property type="project" value="EnsemblMetazoa"/>
</dbReference>
<dbReference type="GO" id="GO:0045793">
    <property type="term" value="P:positive regulation of cell size"/>
    <property type="evidence" value="ECO:0007669"/>
    <property type="project" value="EnsemblMetazoa"/>
</dbReference>
<dbReference type="GO" id="GO:0070374">
    <property type="term" value="P:positive regulation of ERK1 and ERK2 cascade"/>
    <property type="evidence" value="ECO:0007669"/>
    <property type="project" value="EnsemblMetazoa"/>
</dbReference>
<dbReference type="GO" id="GO:0035208">
    <property type="term" value="P:positive regulation of hemocyte proliferation"/>
    <property type="evidence" value="ECO:0007669"/>
    <property type="project" value="EnsemblMetazoa"/>
</dbReference>
<dbReference type="GO" id="GO:0046534">
    <property type="term" value="P:positive regulation of photoreceptor cell differentiation"/>
    <property type="evidence" value="ECO:0007669"/>
    <property type="project" value="EnsemblMetazoa"/>
</dbReference>
<dbReference type="GO" id="GO:1904263">
    <property type="term" value="P:positive regulation of TORC1 signaling"/>
    <property type="evidence" value="ECO:0007669"/>
    <property type="project" value="EnsemblMetazoa"/>
</dbReference>
<dbReference type="GO" id="GO:0045465">
    <property type="term" value="P:R8 cell differentiation"/>
    <property type="evidence" value="ECO:0007669"/>
    <property type="project" value="EnsemblMetazoa"/>
</dbReference>
<dbReference type="GO" id="GO:0007265">
    <property type="term" value="P:Ras protein signal transduction"/>
    <property type="evidence" value="ECO:0007669"/>
    <property type="project" value="EnsemblMetazoa"/>
</dbReference>
<dbReference type="GO" id="GO:0040014">
    <property type="term" value="P:regulation of multicellular organism growth"/>
    <property type="evidence" value="ECO:0007669"/>
    <property type="project" value="EnsemblMetazoa"/>
</dbReference>
<dbReference type="GO" id="GO:0045500">
    <property type="term" value="P:sevenless signaling pathway"/>
    <property type="evidence" value="ECO:0007669"/>
    <property type="project" value="EnsemblMetazoa"/>
</dbReference>
<dbReference type="GO" id="GO:0048865">
    <property type="term" value="P:stem cell fate commitment"/>
    <property type="evidence" value="ECO:0007669"/>
    <property type="project" value="EnsemblMetazoa"/>
</dbReference>
<dbReference type="GO" id="GO:0072089">
    <property type="term" value="P:stem cell proliferation"/>
    <property type="evidence" value="ECO:0007669"/>
    <property type="project" value="EnsemblMetazoa"/>
</dbReference>
<dbReference type="GO" id="GO:0007430">
    <property type="term" value="P:terminal branching, open tracheal system"/>
    <property type="evidence" value="ECO:0007669"/>
    <property type="project" value="EnsemblMetazoa"/>
</dbReference>
<dbReference type="GO" id="GO:0007362">
    <property type="term" value="P:terminal region determination"/>
    <property type="evidence" value="ECO:0007669"/>
    <property type="project" value="EnsemblMetazoa"/>
</dbReference>
<dbReference type="GO" id="GO:0008293">
    <property type="term" value="P:torso signaling pathway"/>
    <property type="evidence" value="ECO:0007669"/>
    <property type="project" value="EnsemblMetazoa"/>
</dbReference>
<dbReference type="GO" id="GO:0060438">
    <property type="term" value="P:trachea development"/>
    <property type="evidence" value="ECO:0007669"/>
    <property type="project" value="EnsemblMetazoa"/>
</dbReference>
<dbReference type="GO" id="GO:0007426">
    <property type="term" value="P:tracheal outgrowth, open tracheal system"/>
    <property type="evidence" value="ECO:0007669"/>
    <property type="project" value="EnsemblMetazoa"/>
</dbReference>
<dbReference type="GO" id="GO:0048010">
    <property type="term" value="P:vascular endothelial growth factor receptor signaling pathway"/>
    <property type="evidence" value="ECO:0007669"/>
    <property type="project" value="EnsemblMetazoa"/>
</dbReference>
<dbReference type="GO" id="GO:0035313">
    <property type="term" value="P:wound healing, spreading of epidermal cells"/>
    <property type="evidence" value="ECO:0007669"/>
    <property type="project" value="EnsemblMetazoa"/>
</dbReference>
<dbReference type="CDD" id="cd04138">
    <property type="entry name" value="H_N_K_Ras_like"/>
    <property type="match status" value="1"/>
</dbReference>
<dbReference type="FunFam" id="3.40.50.300:FF:000096">
    <property type="entry name" value="KRAS proto-oncogene, GTPase"/>
    <property type="match status" value="1"/>
</dbReference>
<dbReference type="Gene3D" id="3.40.50.300">
    <property type="entry name" value="P-loop containing nucleotide triphosphate hydrolases"/>
    <property type="match status" value="1"/>
</dbReference>
<dbReference type="InterPro" id="IPR027417">
    <property type="entry name" value="P-loop_NTPase"/>
</dbReference>
<dbReference type="InterPro" id="IPR005225">
    <property type="entry name" value="Small_GTP-bd"/>
</dbReference>
<dbReference type="InterPro" id="IPR001806">
    <property type="entry name" value="Small_GTPase"/>
</dbReference>
<dbReference type="InterPro" id="IPR020849">
    <property type="entry name" value="Small_GTPase_Ras-type"/>
</dbReference>
<dbReference type="NCBIfam" id="TIGR00231">
    <property type="entry name" value="small_GTP"/>
    <property type="match status" value="1"/>
</dbReference>
<dbReference type="PANTHER" id="PTHR24070">
    <property type="entry name" value="RAS, DI-RAS, AND RHEB FAMILY MEMBERS OF SMALL GTPASE SUPERFAMILY"/>
    <property type="match status" value="1"/>
</dbReference>
<dbReference type="Pfam" id="PF00071">
    <property type="entry name" value="Ras"/>
    <property type="match status" value="1"/>
</dbReference>
<dbReference type="PRINTS" id="PR00449">
    <property type="entry name" value="RASTRNSFRMNG"/>
</dbReference>
<dbReference type="SMART" id="SM00175">
    <property type="entry name" value="RAB"/>
    <property type="match status" value="1"/>
</dbReference>
<dbReference type="SMART" id="SM00176">
    <property type="entry name" value="RAN"/>
    <property type="match status" value="1"/>
</dbReference>
<dbReference type="SMART" id="SM00173">
    <property type="entry name" value="RAS"/>
    <property type="match status" value="1"/>
</dbReference>
<dbReference type="SMART" id="SM00174">
    <property type="entry name" value="RHO"/>
    <property type="match status" value="1"/>
</dbReference>
<dbReference type="SUPFAM" id="SSF52540">
    <property type="entry name" value="P-loop containing nucleoside triphosphate hydrolases"/>
    <property type="match status" value="1"/>
</dbReference>
<dbReference type="PROSITE" id="PS51421">
    <property type="entry name" value="RAS"/>
    <property type="match status" value="1"/>
</dbReference>
<keyword id="KW-1003">Cell membrane</keyword>
<keyword id="KW-0342">GTP-binding</keyword>
<keyword id="KW-0378">Hydrolase</keyword>
<keyword id="KW-0449">Lipoprotein</keyword>
<keyword id="KW-0472">Membrane</keyword>
<keyword id="KW-0488">Methylation</keyword>
<keyword id="KW-0547">Nucleotide-binding</keyword>
<keyword id="KW-0636">Prenylation</keyword>
<keyword id="KW-1185">Reference proteome</keyword>
<name>RAS1_DROPE</name>
<proteinExistence type="inferred from homology"/>
<gene>
    <name evidence="2" type="primary">Ras85D</name>
    <name type="ORF">GL22227</name>
</gene>
<sequence length="189" mass="21616">MTEYKLVVVGAGGVGKSALTIQLIQNHFVDEYDPTIEDSYRKQVVIDGETCLLDILDTAGQEEYSAMRDQYMRTGEGFLLVFAVNSAKSFEDIGTYREQIKRVKDAEEVPMVLVGNKCDLTTWNVKNEQAREVAKQYGIPYIETSAKTRMGVDDAFYTLVREIRKDKDNKGRRGRKLNKPNRRFKCKIL</sequence>
<evidence type="ECO:0000250" key="1">
    <source>
        <dbReference type="UniProtKB" id="P01112"/>
    </source>
</evidence>
<evidence type="ECO:0000250" key="2">
    <source>
        <dbReference type="UniProtKB" id="P08646"/>
    </source>
</evidence>
<evidence type="ECO:0000255" key="3"/>
<evidence type="ECO:0000312" key="4">
    <source>
        <dbReference type="EMBL" id="EDW34383.1"/>
    </source>
</evidence>
<organism>
    <name type="scientific">Drosophila persimilis</name>
    <name type="common">Fruit fly</name>
    <dbReference type="NCBI Taxonomy" id="7234"/>
    <lineage>
        <taxon>Eukaryota</taxon>
        <taxon>Metazoa</taxon>
        <taxon>Ecdysozoa</taxon>
        <taxon>Arthropoda</taxon>
        <taxon>Hexapoda</taxon>
        <taxon>Insecta</taxon>
        <taxon>Pterygota</taxon>
        <taxon>Neoptera</taxon>
        <taxon>Endopterygota</taxon>
        <taxon>Diptera</taxon>
        <taxon>Brachycera</taxon>
        <taxon>Muscomorpha</taxon>
        <taxon>Ephydroidea</taxon>
        <taxon>Drosophilidae</taxon>
        <taxon>Drosophila</taxon>
        <taxon>Sophophora</taxon>
    </lineage>
</organism>